<evidence type="ECO:0000255" key="1">
    <source>
        <dbReference type="HAMAP-Rule" id="MF_00034"/>
    </source>
</evidence>
<comment type="function">
    <text evidence="1">The RuvA-RuvB-RuvC complex processes Holliday junction (HJ) DNA during genetic recombination and DNA repair. Endonuclease that resolves HJ intermediates. Cleaves cruciform DNA by making single-stranded nicks across the HJ at symmetrical positions within the homologous arms, yielding a 5'-phosphate and a 3'-hydroxyl group; requires a central core of homology in the junction. The consensus cleavage sequence is 5'-(A/T)TT(C/G)-3'. Cleavage occurs on the 3'-side of the TT dinucleotide at the point of strand exchange. HJ branch migration catalyzed by RuvA-RuvB allows RuvC to scan DNA until it finds its consensus sequence, where it cleaves and resolves the cruciform DNA.</text>
</comment>
<comment type="catalytic activity">
    <reaction evidence="1">
        <text>Endonucleolytic cleavage at a junction such as a reciprocal single-stranded crossover between two homologous DNA duplexes (Holliday junction).</text>
        <dbReference type="EC" id="3.1.21.10"/>
    </reaction>
</comment>
<comment type="cofactor">
    <cofactor evidence="1">
        <name>Mg(2+)</name>
        <dbReference type="ChEBI" id="CHEBI:18420"/>
    </cofactor>
    <text evidence="1">Binds 2 Mg(2+) ion per subunit.</text>
</comment>
<comment type="subunit">
    <text evidence="1">Homodimer which binds Holliday junction (HJ) DNA. The HJ becomes 2-fold symmetrical on binding to RuvC with unstacked arms; it has a different conformation from HJ DNA in complex with RuvA. In the full resolvosome a probable DNA-RuvA(4)-RuvB(12)-RuvC(2) complex forms which resolves the HJ.</text>
</comment>
<comment type="subcellular location">
    <subcellularLocation>
        <location evidence="1">Cytoplasm</location>
    </subcellularLocation>
</comment>
<comment type="similarity">
    <text evidence="1">Belongs to the RuvC family.</text>
</comment>
<sequence>MLKVLGIDPGSRFTGYGVVEWGGGKPRYVASGCIRVTGETLAERLRCIYLGVTQVVSMYAPDEAAIEQVFMARNADSALKLGQARGVAILAMAEQGLQVAEYSAKKVKQSVVGKGNAEKWQVQHMMQAMLDLQAKPQADAADALAIAVCHLHTQQSLMRIGSVSSSRRGRMR</sequence>
<keyword id="KW-0963">Cytoplasm</keyword>
<keyword id="KW-0227">DNA damage</keyword>
<keyword id="KW-0233">DNA recombination</keyword>
<keyword id="KW-0234">DNA repair</keyword>
<keyword id="KW-0238">DNA-binding</keyword>
<keyword id="KW-0255">Endonuclease</keyword>
<keyword id="KW-0378">Hydrolase</keyword>
<keyword id="KW-0460">Magnesium</keyword>
<keyword id="KW-0479">Metal-binding</keyword>
<keyword id="KW-0540">Nuclease</keyword>
<keyword id="KW-1185">Reference proteome</keyword>
<feature type="chain" id="PRO_1000002764" description="Crossover junction endodeoxyribonuclease RuvC">
    <location>
        <begin position="1"/>
        <end position="172"/>
    </location>
</feature>
<feature type="active site" evidence="1">
    <location>
        <position position="8"/>
    </location>
</feature>
<feature type="active site" evidence="1">
    <location>
        <position position="67"/>
    </location>
</feature>
<feature type="active site" evidence="1">
    <location>
        <position position="139"/>
    </location>
</feature>
<feature type="binding site" evidence="1">
    <location>
        <position position="8"/>
    </location>
    <ligand>
        <name>Mg(2+)</name>
        <dbReference type="ChEBI" id="CHEBI:18420"/>
        <label>1</label>
    </ligand>
</feature>
<feature type="binding site" evidence="1">
    <location>
        <position position="67"/>
    </location>
    <ligand>
        <name>Mg(2+)</name>
        <dbReference type="ChEBI" id="CHEBI:18420"/>
        <label>2</label>
    </ligand>
</feature>
<feature type="binding site" evidence="1">
    <location>
        <position position="139"/>
    </location>
    <ligand>
        <name>Mg(2+)</name>
        <dbReference type="ChEBI" id="CHEBI:18420"/>
        <label>1</label>
    </ligand>
</feature>
<gene>
    <name evidence="1" type="primary">ruvC</name>
    <name type="ordered locus">HCH_04924</name>
</gene>
<accession>Q2SCL1</accession>
<proteinExistence type="inferred from homology"/>
<protein>
    <recommendedName>
        <fullName evidence="1">Crossover junction endodeoxyribonuclease RuvC</fullName>
        <ecNumber evidence="1">3.1.21.10</ecNumber>
    </recommendedName>
    <alternativeName>
        <fullName evidence="1">Holliday junction nuclease RuvC</fullName>
    </alternativeName>
    <alternativeName>
        <fullName evidence="1">Holliday junction resolvase RuvC</fullName>
    </alternativeName>
</protein>
<organism>
    <name type="scientific">Hahella chejuensis (strain KCTC 2396)</name>
    <dbReference type="NCBI Taxonomy" id="349521"/>
    <lineage>
        <taxon>Bacteria</taxon>
        <taxon>Pseudomonadati</taxon>
        <taxon>Pseudomonadota</taxon>
        <taxon>Gammaproteobacteria</taxon>
        <taxon>Oceanospirillales</taxon>
        <taxon>Hahellaceae</taxon>
        <taxon>Hahella</taxon>
    </lineage>
</organism>
<dbReference type="EC" id="3.1.21.10" evidence="1"/>
<dbReference type="EMBL" id="CP000155">
    <property type="protein sequence ID" value="ABC31613.1"/>
    <property type="molecule type" value="Genomic_DNA"/>
</dbReference>
<dbReference type="RefSeq" id="WP_011398678.1">
    <property type="nucleotide sequence ID" value="NC_007645.1"/>
</dbReference>
<dbReference type="SMR" id="Q2SCL1"/>
<dbReference type="STRING" id="349521.HCH_04924"/>
<dbReference type="KEGG" id="hch:HCH_04924"/>
<dbReference type="eggNOG" id="COG0817">
    <property type="taxonomic scope" value="Bacteria"/>
</dbReference>
<dbReference type="HOGENOM" id="CLU_091257_2_1_6"/>
<dbReference type="OrthoDB" id="9805499at2"/>
<dbReference type="Proteomes" id="UP000000238">
    <property type="component" value="Chromosome"/>
</dbReference>
<dbReference type="GO" id="GO:0005737">
    <property type="term" value="C:cytoplasm"/>
    <property type="evidence" value="ECO:0007669"/>
    <property type="project" value="UniProtKB-SubCell"/>
</dbReference>
<dbReference type="GO" id="GO:0048476">
    <property type="term" value="C:Holliday junction resolvase complex"/>
    <property type="evidence" value="ECO:0007669"/>
    <property type="project" value="UniProtKB-UniRule"/>
</dbReference>
<dbReference type="GO" id="GO:0008821">
    <property type="term" value="F:crossover junction DNA endonuclease activity"/>
    <property type="evidence" value="ECO:0007669"/>
    <property type="project" value="UniProtKB-UniRule"/>
</dbReference>
<dbReference type="GO" id="GO:0003677">
    <property type="term" value="F:DNA binding"/>
    <property type="evidence" value="ECO:0007669"/>
    <property type="project" value="UniProtKB-KW"/>
</dbReference>
<dbReference type="GO" id="GO:0000287">
    <property type="term" value="F:magnesium ion binding"/>
    <property type="evidence" value="ECO:0007669"/>
    <property type="project" value="UniProtKB-UniRule"/>
</dbReference>
<dbReference type="GO" id="GO:0006310">
    <property type="term" value="P:DNA recombination"/>
    <property type="evidence" value="ECO:0007669"/>
    <property type="project" value="UniProtKB-UniRule"/>
</dbReference>
<dbReference type="GO" id="GO:0006281">
    <property type="term" value="P:DNA repair"/>
    <property type="evidence" value="ECO:0007669"/>
    <property type="project" value="UniProtKB-UniRule"/>
</dbReference>
<dbReference type="CDD" id="cd16962">
    <property type="entry name" value="RuvC"/>
    <property type="match status" value="1"/>
</dbReference>
<dbReference type="FunFam" id="3.30.420.10:FF:000002">
    <property type="entry name" value="Crossover junction endodeoxyribonuclease RuvC"/>
    <property type="match status" value="1"/>
</dbReference>
<dbReference type="Gene3D" id="3.30.420.10">
    <property type="entry name" value="Ribonuclease H-like superfamily/Ribonuclease H"/>
    <property type="match status" value="1"/>
</dbReference>
<dbReference type="HAMAP" id="MF_00034">
    <property type="entry name" value="RuvC"/>
    <property type="match status" value="1"/>
</dbReference>
<dbReference type="InterPro" id="IPR012337">
    <property type="entry name" value="RNaseH-like_sf"/>
</dbReference>
<dbReference type="InterPro" id="IPR036397">
    <property type="entry name" value="RNaseH_sf"/>
</dbReference>
<dbReference type="InterPro" id="IPR020563">
    <property type="entry name" value="X-over_junc_endoDNase_Mg_BS"/>
</dbReference>
<dbReference type="InterPro" id="IPR002176">
    <property type="entry name" value="X-over_junc_endoDNase_RuvC"/>
</dbReference>
<dbReference type="NCBIfam" id="TIGR00228">
    <property type="entry name" value="ruvC"/>
    <property type="match status" value="1"/>
</dbReference>
<dbReference type="PANTHER" id="PTHR30194">
    <property type="entry name" value="CROSSOVER JUNCTION ENDODEOXYRIBONUCLEASE RUVC"/>
    <property type="match status" value="1"/>
</dbReference>
<dbReference type="PANTHER" id="PTHR30194:SF3">
    <property type="entry name" value="CROSSOVER JUNCTION ENDODEOXYRIBONUCLEASE RUVC"/>
    <property type="match status" value="1"/>
</dbReference>
<dbReference type="Pfam" id="PF02075">
    <property type="entry name" value="RuvC"/>
    <property type="match status" value="1"/>
</dbReference>
<dbReference type="PRINTS" id="PR00696">
    <property type="entry name" value="RSOLVASERUVC"/>
</dbReference>
<dbReference type="SUPFAM" id="SSF53098">
    <property type="entry name" value="Ribonuclease H-like"/>
    <property type="match status" value="1"/>
</dbReference>
<dbReference type="PROSITE" id="PS01321">
    <property type="entry name" value="RUVC"/>
    <property type="match status" value="1"/>
</dbReference>
<reference key="1">
    <citation type="journal article" date="2005" name="Nucleic Acids Res.">
        <title>Genomic blueprint of Hahella chejuensis, a marine microbe producing an algicidal agent.</title>
        <authorList>
            <person name="Jeong H."/>
            <person name="Yim J.H."/>
            <person name="Lee C."/>
            <person name="Choi S.-H."/>
            <person name="Park Y.K."/>
            <person name="Yoon S.H."/>
            <person name="Hur C.-G."/>
            <person name="Kang H.-Y."/>
            <person name="Kim D."/>
            <person name="Lee H.H."/>
            <person name="Park K.H."/>
            <person name="Park S.-H."/>
            <person name="Park H.-S."/>
            <person name="Lee H.K."/>
            <person name="Oh T.K."/>
            <person name="Kim J.F."/>
        </authorList>
    </citation>
    <scope>NUCLEOTIDE SEQUENCE [LARGE SCALE GENOMIC DNA]</scope>
    <source>
        <strain>KCTC 2396</strain>
    </source>
</reference>
<name>RUVC_HAHCH</name>